<comment type="function">
    <text evidence="1">Catalyzes the formation of phosphatidylethanolamine (PtdEtn) from phosphatidylserine (PtdSer).</text>
</comment>
<comment type="catalytic activity">
    <reaction evidence="1">
        <text>a 1,2-diacyl-sn-glycero-3-phospho-L-serine + H(+) = a 1,2-diacyl-sn-glycero-3-phosphoethanolamine + CO2</text>
        <dbReference type="Rhea" id="RHEA:20828"/>
        <dbReference type="ChEBI" id="CHEBI:15378"/>
        <dbReference type="ChEBI" id="CHEBI:16526"/>
        <dbReference type="ChEBI" id="CHEBI:57262"/>
        <dbReference type="ChEBI" id="CHEBI:64612"/>
        <dbReference type="EC" id="4.1.1.65"/>
    </reaction>
</comment>
<comment type="cofactor">
    <cofactor evidence="1">
        <name>pyruvate</name>
        <dbReference type="ChEBI" id="CHEBI:15361"/>
    </cofactor>
    <text evidence="1">Binds 1 pyruvoyl group covalently per subunit.</text>
</comment>
<comment type="pathway">
    <text evidence="1">Phospholipid metabolism; phosphatidylethanolamine biosynthesis; phosphatidylethanolamine from CDP-diacylglycerol: step 2/2.</text>
</comment>
<comment type="subunit">
    <text evidence="1">Heterodimer of a large membrane-associated beta subunit and a small pyruvoyl-containing alpha subunit.</text>
</comment>
<comment type="subcellular location">
    <subcellularLocation>
        <location evidence="1">Cell membrane</location>
        <topology evidence="1">Peripheral membrane protein</topology>
    </subcellularLocation>
</comment>
<comment type="PTM">
    <text evidence="1">Is synthesized initially as an inactive proenzyme. Formation of the active enzyme involves a self-maturation process in which the active site pyruvoyl group is generated from an internal serine residue via an autocatalytic post-translational modification. Two non-identical subunits are generated from the proenzyme in this reaction, and the pyruvate is formed at the N-terminus of the alpha chain, which is derived from the carboxyl end of the proenzyme. The autoendoproteolytic cleavage occurs by a canonical serine protease mechanism, in which the side chain hydroxyl group of the serine supplies its oxygen atom to form the C-terminus of the beta chain, while the remainder of the serine residue undergoes an oxidative deamination to produce ammonia and the pyruvoyl prosthetic group on the alpha chain. During this reaction, the Ser that is part of the protease active site of the proenzyme becomes the pyruvoyl prosthetic group, which constitutes an essential element of the active site of the mature decarboxylase.</text>
</comment>
<comment type="similarity">
    <text evidence="1">Belongs to the phosphatidylserine decarboxylase family. PSD-B subfamily. Prokaryotic type I sub-subfamily.</text>
</comment>
<protein>
    <recommendedName>
        <fullName evidence="1">Phosphatidylserine decarboxylase proenzyme</fullName>
        <ecNumber evidence="1">4.1.1.65</ecNumber>
    </recommendedName>
    <component>
        <recommendedName>
            <fullName evidence="1">Phosphatidylserine decarboxylase alpha chain</fullName>
        </recommendedName>
    </component>
    <component>
        <recommendedName>
            <fullName evidence="1">Phosphatidylserine decarboxylase beta chain</fullName>
        </recommendedName>
    </component>
</protein>
<keyword id="KW-1003">Cell membrane</keyword>
<keyword id="KW-0210">Decarboxylase</keyword>
<keyword id="KW-0444">Lipid biosynthesis</keyword>
<keyword id="KW-0443">Lipid metabolism</keyword>
<keyword id="KW-0456">Lyase</keyword>
<keyword id="KW-0472">Membrane</keyword>
<keyword id="KW-0594">Phospholipid biosynthesis</keyword>
<keyword id="KW-1208">Phospholipid metabolism</keyword>
<keyword id="KW-0670">Pyruvate</keyword>
<keyword id="KW-1185">Reference proteome</keyword>
<keyword id="KW-0865">Zymogen</keyword>
<sequence length="297" mass="33336">MQLKSYPAPTYAQRAKIAFQYMMPQLYLTQAAGWLAERKWGVITHFIINVFAKKYQVNLAEAEKTKASDYASFNEFFIRPLKENARPINQNPQALCLPADGRVSELGKIEENQLLQAKGHQFSLETLLANDLNLADKFKNGNFITTYLSPRDYHRVHMPCDATLRKMIYVPGELFSVNPFLAEHVPNLFARNERLICEFETAFGPMVQILVGATITASMSTVWAGVINPPRAKEVAVYEYLPTGETAVHLKKGQEMGAFRLGSTVINLFPKGAVELEAHLKAGEPTKMGERLGKINL</sequence>
<evidence type="ECO:0000255" key="1">
    <source>
        <dbReference type="HAMAP-Rule" id="MF_00662"/>
    </source>
</evidence>
<gene>
    <name evidence="1" type="primary">psd</name>
    <name type="ordered locus">HAPS_1207</name>
</gene>
<name>PSD_GLAP5</name>
<organism>
    <name type="scientific">Glaesserella parasuis serovar 5 (strain SH0165)</name>
    <name type="common">Haemophilus parasuis</name>
    <dbReference type="NCBI Taxonomy" id="557723"/>
    <lineage>
        <taxon>Bacteria</taxon>
        <taxon>Pseudomonadati</taxon>
        <taxon>Pseudomonadota</taxon>
        <taxon>Gammaproteobacteria</taxon>
        <taxon>Pasteurellales</taxon>
        <taxon>Pasteurellaceae</taxon>
        <taxon>Glaesserella</taxon>
    </lineage>
</organism>
<dbReference type="EC" id="4.1.1.65" evidence="1"/>
<dbReference type="EMBL" id="CP001321">
    <property type="protein sequence ID" value="ACL32810.1"/>
    <property type="molecule type" value="Genomic_DNA"/>
</dbReference>
<dbReference type="RefSeq" id="WP_015939672.1">
    <property type="nucleotide sequence ID" value="NC_011852.1"/>
</dbReference>
<dbReference type="SMR" id="B8F658"/>
<dbReference type="STRING" id="557723.HAPS_1207"/>
<dbReference type="KEGG" id="hap:HAPS_1207"/>
<dbReference type="PATRIC" id="fig|557723.8.peg.1198"/>
<dbReference type="HOGENOM" id="CLU_029061_4_1_6"/>
<dbReference type="UniPathway" id="UPA00558">
    <property type="reaction ID" value="UER00616"/>
</dbReference>
<dbReference type="Proteomes" id="UP000006743">
    <property type="component" value="Chromosome"/>
</dbReference>
<dbReference type="GO" id="GO:0005886">
    <property type="term" value="C:plasma membrane"/>
    <property type="evidence" value="ECO:0007669"/>
    <property type="project" value="UniProtKB-SubCell"/>
</dbReference>
<dbReference type="GO" id="GO:0004609">
    <property type="term" value="F:phosphatidylserine decarboxylase activity"/>
    <property type="evidence" value="ECO:0007669"/>
    <property type="project" value="UniProtKB-UniRule"/>
</dbReference>
<dbReference type="GO" id="GO:0006646">
    <property type="term" value="P:phosphatidylethanolamine biosynthetic process"/>
    <property type="evidence" value="ECO:0007669"/>
    <property type="project" value="UniProtKB-UniRule"/>
</dbReference>
<dbReference type="HAMAP" id="MF_00662">
    <property type="entry name" value="PS_decarb_PSD_B_type1"/>
    <property type="match status" value="1"/>
</dbReference>
<dbReference type="InterPro" id="IPR003817">
    <property type="entry name" value="PS_Dcarbxylase"/>
</dbReference>
<dbReference type="InterPro" id="IPR033177">
    <property type="entry name" value="PSD-B"/>
</dbReference>
<dbReference type="InterPro" id="IPR033178">
    <property type="entry name" value="PSD_type1_pro"/>
</dbReference>
<dbReference type="NCBIfam" id="TIGR00163">
    <property type="entry name" value="PS_decarb"/>
    <property type="match status" value="1"/>
</dbReference>
<dbReference type="PANTHER" id="PTHR10067">
    <property type="entry name" value="PHOSPHATIDYLSERINE DECARBOXYLASE"/>
    <property type="match status" value="1"/>
</dbReference>
<dbReference type="PANTHER" id="PTHR10067:SF6">
    <property type="entry name" value="PHOSPHATIDYLSERINE DECARBOXYLASE PROENZYME, MITOCHONDRIAL"/>
    <property type="match status" value="1"/>
</dbReference>
<dbReference type="Pfam" id="PF02666">
    <property type="entry name" value="PS_Dcarbxylase"/>
    <property type="match status" value="1"/>
</dbReference>
<reference key="1">
    <citation type="journal article" date="2009" name="J. Bacteriol.">
        <title>Complete genome sequence of Haemophilus parasuis SH0165.</title>
        <authorList>
            <person name="Yue M."/>
            <person name="Yang F."/>
            <person name="Yang J."/>
            <person name="Bei W."/>
            <person name="Cai X."/>
            <person name="Chen L."/>
            <person name="Dong J."/>
            <person name="Zhou R."/>
            <person name="Jin M."/>
            <person name="Jin Q."/>
            <person name="Chen H."/>
        </authorList>
    </citation>
    <scope>NUCLEOTIDE SEQUENCE [LARGE SCALE GENOMIC DNA]</scope>
    <source>
        <strain>SH0165</strain>
    </source>
</reference>
<feature type="chain" id="PRO_1000147605" description="Phosphatidylserine decarboxylase beta chain" evidence="1">
    <location>
        <begin position="1"/>
        <end position="262"/>
    </location>
</feature>
<feature type="chain" id="PRO_1000147606" description="Phosphatidylserine decarboxylase alpha chain" evidence="1">
    <location>
        <begin position="263"/>
        <end position="297"/>
    </location>
</feature>
<feature type="active site" description="Charge relay system; for autoendoproteolytic cleavage activity" evidence="1">
    <location>
        <position position="100"/>
    </location>
</feature>
<feature type="active site" description="Charge relay system; for autoendoproteolytic cleavage activity" evidence="1">
    <location>
        <position position="157"/>
    </location>
</feature>
<feature type="active site" description="Charge relay system; for autoendoproteolytic cleavage activity" evidence="1">
    <location>
        <position position="263"/>
    </location>
</feature>
<feature type="active site" description="Schiff-base intermediate with substrate; via pyruvic acid; for decarboxylase activity" evidence="1">
    <location>
        <position position="263"/>
    </location>
</feature>
<feature type="site" description="Cleavage (non-hydrolytic); by autocatalysis" evidence="1">
    <location>
        <begin position="262"/>
        <end position="263"/>
    </location>
</feature>
<feature type="modified residue" description="Pyruvic acid (Ser); by autocatalysis" evidence="1">
    <location>
        <position position="263"/>
    </location>
</feature>
<proteinExistence type="inferred from homology"/>
<accession>B8F658</accession>